<name>RBSU_STAAS</name>
<gene>
    <name type="primary">rbsU</name>
    <name type="ordered locus">SAS0247</name>
</gene>
<protein>
    <recommendedName>
        <fullName>Putative ribose uptake protein RbsU</fullName>
    </recommendedName>
</protein>
<evidence type="ECO:0000250" key="1"/>
<evidence type="ECO:0000255" key="2"/>
<evidence type="ECO:0000305" key="3"/>
<dbReference type="EMBL" id="BX571857">
    <property type="protein sequence ID" value="CAG42017.1"/>
    <property type="molecule type" value="Genomic_DNA"/>
</dbReference>
<dbReference type="RefSeq" id="WP_000029204.1">
    <property type="nucleotide sequence ID" value="NC_002953.3"/>
</dbReference>
<dbReference type="KEGG" id="sas:SAS0247"/>
<dbReference type="HOGENOM" id="CLU_076024_0_1_9"/>
<dbReference type="GO" id="GO:0005886">
    <property type="term" value="C:plasma membrane"/>
    <property type="evidence" value="ECO:0007669"/>
    <property type="project" value="UniProtKB-SubCell"/>
</dbReference>
<dbReference type="GO" id="GO:0015144">
    <property type="term" value="F:carbohydrate transmembrane transporter activity"/>
    <property type="evidence" value="ECO:0007669"/>
    <property type="project" value="InterPro"/>
</dbReference>
<dbReference type="CDD" id="cd23111">
    <property type="entry name" value="ribose_uptake_RbsU"/>
    <property type="match status" value="1"/>
</dbReference>
<dbReference type="InterPro" id="IPR010651">
    <property type="entry name" value="Sugar_transport"/>
</dbReference>
<dbReference type="NCBIfam" id="NF047342">
    <property type="entry name" value="symport_RbsU"/>
    <property type="match status" value="1"/>
</dbReference>
<dbReference type="PANTHER" id="PTHR16119">
    <property type="entry name" value="TRANSMEMBRANE PROTEIN 144"/>
    <property type="match status" value="1"/>
</dbReference>
<dbReference type="PANTHER" id="PTHR16119:SF17">
    <property type="entry name" value="TRANSMEMBRANE PROTEIN 144"/>
    <property type="match status" value="1"/>
</dbReference>
<dbReference type="Pfam" id="PF06800">
    <property type="entry name" value="Sugar_transport"/>
    <property type="match status" value="1"/>
</dbReference>
<dbReference type="SUPFAM" id="SSF103481">
    <property type="entry name" value="Multidrug resistance efflux transporter EmrE"/>
    <property type="match status" value="1"/>
</dbReference>
<feature type="chain" id="PRO_0000213641" description="Putative ribose uptake protein RbsU">
    <location>
        <begin position="1"/>
        <end position="293"/>
    </location>
</feature>
<feature type="transmembrane region" description="Helical" evidence="2">
    <location>
        <begin position="5"/>
        <end position="24"/>
    </location>
</feature>
<feature type="transmembrane region" description="Helical" evidence="2">
    <location>
        <begin position="34"/>
        <end position="51"/>
    </location>
</feature>
<feature type="transmembrane region" description="Helical" evidence="2">
    <location>
        <begin position="58"/>
        <end position="80"/>
    </location>
</feature>
<feature type="transmembrane region" description="Helical" evidence="2">
    <location>
        <begin position="95"/>
        <end position="114"/>
    </location>
</feature>
<feature type="transmembrane region" description="Helical" evidence="2">
    <location>
        <begin position="121"/>
        <end position="138"/>
    </location>
</feature>
<feature type="transmembrane region" description="Helical" evidence="2">
    <location>
        <begin position="153"/>
        <end position="170"/>
    </location>
</feature>
<feature type="transmembrane region" description="Helical" evidence="2">
    <location>
        <begin position="177"/>
        <end position="199"/>
    </location>
</feature>
<feature type="transmembrane region" description="Helical" evidence="2">
    <location>
        <begin position="212"/>
        <end position="234"/>
    </location>
</feature>
<feature type="transmembrane region" description="Helical" evidence="2">
    <location>
        <begin position="241"/>
        <end position="263"/>
    </location>
</feature>
<feature type="transmembrane region" description="Helical" evidence="2">
    <location>
        <begin position="273"/>
        <end position="292"/>
    </location>
</feature>
<proteinExistence type="inferred from homology"/>
<sequence length="293" mass="31243">MSIVALLIGLGPLIGWGFFPTVASKFGGKPVHQIIGATVGTLIFAIILAVVTSSGFPTGTNLLFALLSGAGWGFGQIITFKAFELVGSSRAMPVTTAFQLLGASLWGVFALGNWPGIGHKIIGFTALVVILIGARMTVWSERKEASNAKNLRRAVVLLLIGEFGYWLYSAAPQATSIDGLTAFLPQAMGMVIVAVIYGFMNMKAENPFRNKITWLQIISGFFFAFGALTYLISAQPNMNGLATGFILSQTSVVLATLTGIYFLKQHKTSKEMVITIIGLVLILVAASVTVFIK</sequence>
<keyword id="KW-1003">Cell membrane</keyword>
<keyword id="KW-0472">Membrane</keyword>
<keyword id="KW-0762">Sugar transport</keyword>
<keyword id="KW-0812">Transmembrane</keyword>
<keyword id="KW-1133">Transmembrane helix</keyword>
<keyword id="KW-0813">Transport</keyword>
<reference key="1">
    <citation type="journal article" date="2004" name="Proc. Natl. Acad. Sci. U.S.A.">
        <title>Complete genomes of two clinical Staphylococcus aureus strains: evidence for the rapid evolution of virulence and drug resistance.</title>
        <authorList>
            <person name="Holden M.T.G."/>
            <person name="Feil E.J."/>
            <person name="Lindsay J.A."/>
            <person name="Peacock S.J."/>
            <person name="Day N.P.J."/>
            <person name="Enright M.C."/>
            <person name="Foster T.J."/>
            <person name="Moore C.E."/>
            <person name="Hurst L."/>
            <person name="Atkin R."/>
            <person name="Barron A."/>
            <person name="Bason N."/>
            <person name="Bentley S.D."/>
            <person name="Chillingworth C."/>
            <person name="Chillingworth T."/>
            <person name="Churcher C."/>
            <person name="Clark L."/>
            <person name="Corton C."/>
            <person name="Cronin A."/>
            <person name="Doggett J."/>
            <person name="Dowd L."/>
            <person name="Feltwell T."/>
            <person name="Hance Z."/>
            <person name="Harris B."/>
            <person name="Hauser H."/>
            <person name="Holroyd S."/>
            <person name="Jagels K."/>
            <person name="James K.D."/>
            <person name="Lennard N."/>
            <person name="Line A."/>
            <person name="Mayes R."/>
            <person name="Moule S."/>
            <person name="Mungall K."/>
            <person name="Ormond D."/>
            <person name="Quail M.A."/>
            <person name="Rabbinowitsch E."/>
            <person name="Rutherford K.M."/>
            <person name="Sanders M."/>
            <person name="Sharp S."/>
            <person name="Simmonds M."/>
            <person name="Stevens K."/>
            <person name="Whitehead S."/>
            <person name="Barrell B.G."/>
            <person name="Spratt B.G."/>
            <person name="Parkhill J."/>
        </authorList>
    </citation>
    <scope>NUCLEOTIDE SEQUENCE [LARGE SCALE GENOMIC DNA]</scope>
    <source>
        <strain>MSSA476</strain>
    </source>
</reference>
<accession>Q6GCK2</accession>
<comment type="function">
    <text evidence="1">Could be involved in the uptake of ribose.</text>
</comment>
<comment type="subcellular location">
    <subcellularLocation>
        <location evidence="3">Cell membrane</location>
        <topology evidence="3">Multi-pass membrane protein</topology>
    </subcellularLocation>
</comment>
<comment type="similarity">
    <text evidence="3">Belongs to the GRP transporter (TC 2.A.7.5) family.</text>
</comment>
<organism>
    <name type="scientific">Staphylococcus aureus (strain MSSA476)</name>
    <dbReference type="NCBI Taxonomy" id="282459"/>
    <lineage>
        <taxon>Bacteria</taxon>
        <taxon>Bacillati</taxon>
        <taxon>Bacillota</taxon>
        <taxon>Bacilli</taxon>
        <taxon>Bacillales</taxon>
        <taxon>Staphylococcaceae</taxon>
        <taxon>Staphylococcus</taxon>
    </lineage>
</organism>